<sequence>MLKPLGDRVIIEVTEAAEQTVGGIVLANNAKDKPVTGKVVAVGSGYVLNDGSKQDLTVKSGDQVLFDKYAGQEVSFEGADYLALHEKDIVAIVE</sequence>
<feature type="chain" id="PRO_1000129679" description="Co-chaperonin GroES">
    <location>
        <begin position="1"/>
        <end position="94"/>
    </location>
</feature>
<reference key="1">
    <citation type="journal article" date="2008" name="J. Bacteriol.">
        <title>Complete genome sequence of Leuconostoc citreum KM20.</title>
        <authorList>
            <person name="Kim J.F."/>
            <person name="Jeong H."/>
            <person name="Lee J.-S."/>
            <person name="Choi S.-H."/>
            <person name="Ha M."/>
            <person name="Hur C.-G."/>
            <person name="Kim J.-S."/>
            <person name="Lee S."/>
            <person name="Park H.-S."/>
            <person name="Park Y.-H."/>
            <person name="Oh T.K."/>
        </authorList>
    </citation>
    <scope>NUCLEOTIDE SEQUENCE [LARGE SCALE GENOMIC DNA]</scope>
    <source>
        <strain>KM20</strain>
    </source>
</reference>
<gene>
    <name evidence="1" type="primary">groES</name>
    <name evidence="1" type="synonym">groS</name>
    <name type="ordered locus">LCK_01439</name>
</gene>
<comment type="function">
    <text evidence="1">Together with the chaperonin GroEL, plays an essential role in assisting protein folding. The GroEL-GroES system forms a nano-cage that allows encapsulation of the non-native substrate proteins and provides a physical environment optimized to promote and accelerate protein folding. GroES binds to the apical surface of the GroEL ring, thereby capping the opening of the GroEL channel.</text>
</comment>
<comment type="subunit">
    <text evidence="1">Heptamer of 7 subunits arranged in a ring. Interacts with the chaperonin GroEL.</text>
</comment>
<comment type="subcellular location">
    <subcellularLocation>
        <location evidence="1">Cytoplasm</location>
    </subcellularLocation>
</comment>
<comment type="similarity">
    <text evidence="1">Belongs to the GroES chaperonin family.</text>
</comment>
<keyword id="KW-0143">Chaperone</keyword>
<keyword id="KW-0963">Cytoplasm</keyword>
<keyword id="KW-1185">Reference proteome</keyword>
<protein>
    <recommendedName>
        <fullName evidence="1">Co-chaperonin GroES</fullName>
    </recommendedName>
    <alternativeName>
        <fullName evidence="1">10 kDa chaperonin</fullName>
    </alternativeName>
    <alternativeName>
        <fullName evidence="1">Chaperonin-10</fullName>
        <shortName evidence="1">Cpn10</shortName>
    </alternativeName>
</protein>
<accession>B1MVK9</accession>
<dbReference type="EMBL" id="DQ489736">
    <property type="protein sequence ID" value="ACA83263.1"/>
    <property type="molecule type" value="Genomic_DNA"/>
</dbReference>
<dbReference type="RefSeq" id="WP_004901550.1">
    <property type="nucleotide sequence ID" value="NC_010471.1"/>
</dbReference>
<dbReference type="SMR" id="B1MVK9"/>
<dbReference type="STRING" id="349519.LCK_01439"/>
<dbReference type="GeneID" id="61101529"/>
<dbReference type="KEGG" id="lci:LCK_01439"/>
<dbReference type="eggNOG" id="COG0234">
    <property type="taxonomic scope" value="Bacteria"/>
</dbReference>
<dbReference type="HOGENOM" id="CLU_132825_2_1_9"/>
<dbReference type="OrthoDB" id="9806791at2"/>
<dbReference type="Proteomes" id="UP000002166">
    <property type="component" value="Chromosome"/>
</dbReference>
<dbReference type="GO" id="GO:0005737">
    <property type="term" value="C:cytoplasm"/>
    <property type="evidence" value="ECO:0007669"/>
    <property type="project" value="UniProtKB-SubCell"/>
</dbReference>
<dbReference type="GO" id="GO:0005524">
    <property type="term" value="F:ATP binding"/>
    <property type="evidence" value="ECO:0007669"/>
    <property type="project" value="InterPro"/>
</dbReference>
<dbReference type="GO" id="GO:0046872">
    <property type="term" value="F:metal ion binding"/>
    <property type="evidence" value="ECO:0007669"/>
    <property type="project" value="TreeGrafter"/>
</dbReference>
<dbReference type="GO" id="GO:0044183">
    <property type="term" value="F:protein folding chaperone"/>
    <property type="evidence" value="ECO:0007669"/>
    <property type="project" value="InterPro"/>
</dbReference>
<dbReference type="GO" id="GO:0051087">
    <property type="term" value="F:protein-folding chaperone binding"/>
    <property type="evidence" value="ECO:0007669"/>
    <property type="project" value="TreeGrafter"/>
</dbReference>
<dbReference type="GO" id="GO:0051082">
    <property type="term" value="F:unfolded protein binding"/>
    <property type="evidence" value="ECO:0007669"/>
    <property type="project" value="TreeGrafter"/>
</dbReference>
<dbReference type="GO" id="GO:0051085">
    <property type="term" value="P:chaperone cofactor-dependent protein refolding"/>
    <property type="evidence" value="ECO:0007669"/>
    <property type="project" value="TreeGrafter"/>
</dbReference>
<dbReference type="CDD" id="cd00320">
    <property type="entry name" value="cpn10"/>
    <property type="match status" value="1"/>
</dbReference>
<dbReference type="FunFam" id="2.30.33.40:FF:000001">
    <property type="entry name" value="10 kDa chaperonin"/>
    <property type="match status" value="1"/>
</dbReference>
<dbReference type="Gene3D" id="2.30.33.40">
    <property type="entry name" value="GroES chaperonin"/>
    <property type="match status" value="1"/>
</dbReference>
<dbReference type="HAMAP" id="MF_00580">
    <property type="entry name" value="CH10"/>
    <property type="match status" value="1"/>
</dbReference>
<dbReference type="InterPro" id="IPR020818">
    <property type="entry name" value="Chaperonin_GroES"/>
</dbReference>
<dbReference type="InterPro" id="IPR037124">
    <property type="entry name" value="Chaperonin_GroES_sf"/>
</dbReference>
<dbReference type="InterPro" id="IPR018369">
    <property type="entry name" value="Chaprnonin_Cpn10_CS"/>
</dbReference>
<dbReference type="InterPro" id="IPR011032">
    <property type="entry name" value="GroES-like_sf"/>
</dbReference>
<dbReference type="NCBIfam" id="NF001531">
    <property type="entry name" value="PRK00364.2-2"/>
    <property type="match status" value="1"/>
</dbReference>
<dbReference type="NCBIfam" id="NF001534">
    <property type="entry name" value="PRK00364.2-5"/>
    <property type="match status" value="1"/>
</dbReference>
<dbReference type="PANTHER" id="PTHR10772">
    <property type="entry name" value="10 KDA HEAT SHOCK PROTEIN"/>
    <property type="match status" value="1"/>
</dbReference>
<dbReference type="PANTHER" id="PTHR10772:SF58">
    <property type="entry name" value="CO-CHAPERONIN GROES"/>
    <property type="match status" value="1"/>
</dbReference>
<dbReference type="Pfam" id="PF00166">
    <property type="entry name" value="Cpn10"/>
    <property type="match status" value="1"/>
</dbReference>
<dbReference type="PRINTS" id="PR00297">
    <property type="entry name" value="CHAPERONIN10"/>
</dbReference>
<dbReference type="SMART" id="SM00883">
    <property type="entry name" value="Cpn10"/>
    <property type="match status" value="1"/>
</dbReference>
<dbReference type="SUPFAM" id="SSF50129">
    <property type="entry name" value="GroES-like"/>
    <property type="match status" value="1"/>
</dbReference>
<dbReference type="PROSITE" id="PS00681">
    <property type="entry name" value="CHAPERONINS_CPN10"/>
    <property type="match status" value="1"/>
</dbReference>
<name>CH10_LEUCK</name>
<proteinExistence type="inferred from homology"/>
<evidence type="ECO:0000255" key="1">
    <source>
        <dbReference type="HAMAP-Rule" id="MF_00580"/>
    </source>
</evidence>
<organism>
    <name type="scientific">Leuconostoc citreum (strain KM20)</name>
    <dbReference type="NCBI Taxonomy" id="349519"/>
    <lineage>
        <taxon>Bacteria</taxon>
        <taxon>Bacillati</taxon>
        <taxon>Bacillota</taxon>
        <taxon>Bacilli</taxon>
        <taxon>Lactobacillales</taxon>
        <taxon>Lactobacillaceae</taxon>
        <taxon>Leuconostoc</taxon>
    </lineage>
</organism>